<protein>
    <recommendedName>
        <fullName evidence="3">Small ribosomal subunit protein uS4c</fullName>
    </recommendedName>
    <alternativeName>
        <fullName>30S ribosomal protein S4, chloroplastic</fullName>
    </alternativeName>
</protein>
<accession>P36464</accession>
<sequence length="196" mass="22727">MSRYRGPRLKKIRRLGALPGLTRKTPKSRSNLKKKFHSGKKEQYRIRLQEKQKLRFHYGLTERQLLRYVQIAGKAKRSTGQVLLQLLEMRLDNILFRLGMASTIPGARQLVNHRHILVNGRIVNIPSFRCKPRDIITTKDNQRSKGLVQNSIASSDPGKLPKHLTIDTLEYKGLVNKILDRKWVGLKINELLVVEY</sequence>
<gene>
    <name type="primary">rps4</name>
</gene>
<reference key="1">
    <citation type="journal article" date="1994" name="Plant Syst. Evol.">
        <title>The chloroplast gene rps4 as a tool for the study of Poaceae phylogeny.</title>
        <authorList>
            <person name="Nadot S."/>
            <person name="Bajon R."/>
            <person name="Lejeune B."/>
        </authorList>
        <dbReference type="AGRICOLA" id="IND20417698"/>
    </citation>
    <scope>NUCLEOTIDE SEQUENCE [GENOMIC DNA]</scope>
</reference>
<keyword id="KW-0150">Chloroplast</keyword>
<keyword id="KW-0934">Plastid</keyword>
<keyword id="KW-0687">Ribonucleoprotein</keyword>
<keyword id="KW-0689">Ribosomal protein</keyword>
<keyword id="KW-0694">RNA-binding</keyword>
<keyword id="KW-0699">rRNA-binding</keyword>
<geneLocation type="chloroplast"/>
<name>RR4_LYGSP</name>
<dbReference type="EMBL" id="Z29244">
    <property type="protein sequence ID" value="CAA82443.1"/>
    <property type="molecule type" value="Genomic_DNA"/>
</dbReference>
<dbReference type="PIR" id="S41273">
    <property type="entry name" value="S41273"/>
</dbReference>
<dbReference type="SMR" id="P36464"/>
<dbReference type="GO" id="GO:0009507">
    <property type="term" value="C:chloroplast"/>
    <property type="evidence" value="ECO:0007669"/>
    <property type="project" value="UniProtKB-SubCell"/>
</dbReference>
<dbReference type="GO" id="GO:0015935">
    <property type="term" value="C:small ribosomal subunit"/>
    <property type="evidence" value="ECO:0007669"/>
    <property type="project" value="InterPro"/>
</dbReference>
<dbReference type="GO" id="GO:0019843">
    <property type="term" value="F:rRNA binding"/>
    <property type="evidence" value="ECO:0007669"/>
    <property type="project" value="UniProtKB-KW"/>
</dbReference>
<dbReference type="GO" id="GO:0003735">
    <property type="term" value="F:structural constituent of ribosome"/>
    <property type="evidence" value="ECO:0007669"/>
    <property type="project" value="InterPro"/>
</dbReference>
<dbReference type="GO" id="GO:0042274">
    <property type="term" value="P:ribosomal small subunit biogenesis"/>
    <property type="evidence" value="ECO:0007669"/>
    <property type="project" value="TreeGrafter"/>
</dbReference>
<dbReference type="GO" id="GO:0006412">
    <property type="term" value="P:translation"/>
    <property type="evidence" value="ECO:0007669"/>
    <property type="project" value="InterPro"/>
</dbReference>
<dbReference type="CDD" id="cd00165">
    <property type="entry name" value="S4"/>
    <property type="match status" value="1"/>
</dbReference>
<dbReference type="FunFam" id="1.10.1050.10:FF:000002">
    <property type="entry name" value="30S ribosomal protein S4, chloroplastic"/>
    <property type="match status" value="1"/>
</dbReference>
<dbReference type="FunFam" id="3.10.290.10:FF:000081">
    <property type="entry name" value="30S ribosomal protein S4, chloroplastic"/>
    <property type="match status" value="1"/>
</dbReference>
<dbReference type="Gene3D" id="1.10.1050.10">
    <property type="entry name" value="Ribosomal Protein S4 Delta 41, Chain A, domain 1"/>
    <property type="match status" value="1"/>
</dbReference>
<dbReference type="Gene3D" id="3.10.290.10">
    <property type="entry name" value="RNA-binding S4 domain"/>
    <property type="match status" value="1"/>
</dbReference>
<dbReference type="HAMAP" id="MF_01306_B">
    <property type="entry name" value="Ribosomal_uS4_B"/>
    <property type="match status" value="1"/>
</dbReference>
<dbReference type="InterPro" id="IPR022801">
    <property type="entry name" value="Ribosomal_uS4"/>
</dbReference>
<dbReference type="InterPro" id="IPR005709">
    <property type="entry name" value="Ribosomal_uS4_bac-type"/>
</dbReference>
<dbReference type="InterPro" id="IPR018079">
    <property type="entry name" value="Ribosomal_uS4_CS"/>
</dbReference>
<dbReference type="InterPro" id="IPR001912">
    <property type="entry name" value="Ribosomal_uS4_N"/>
</dbReference>
<dbReference type="InterPro" id="IPR002942">
    <property type="entry name" value="S4_RNA-bd"/>
</dbReference>
<dbReference type="InterPro" id="IPR036986">
    <property type="entry name" value="S4_RNA-bd_sf"/>
</dbReference>
<dbReference type="NCBIfam" id="NF003717">
    <property type="entry name" value="PRK05327.1"/>
    <property type="match status" value="1"/>
</dbReference>
<dbReference type="NCBIfam" id="TIGR01017">
    <property type="entry name" value="rpsD_bact"/>
    <property type="match status" value="1"/>
</dbReference>
<dbReference type="PANTHER" id="PTHR11831">
    <property type="entry name" value="30S 40S RIBOSOMAL PROTEIN"/>
    <property type="match status" value="1"/>
</dbReference>
<dbReference type="PANTHER" id="PTHR11831:SF4">
    <property type="entry name" value="SMALL RIBOSOMAL SUBUNIT PROTEIN US4M"/>
    <property type="match status" value="1"/>
</dbReference>
<dbReference type="Pfam" id="PF00163">
    <property type="entry name" value="Ribosomal_S4"/>
    <property type="match status" value="1"/>
</dbReference>
<dbReference type="Pfam" id="PF01479">
    <property type="entry name" value="S4"/>
    <property type="match status" value="1"/>
</dbReference>
<dbReference type="SMART" id="SM01390">
    <property type="entry name" value="Ribosomal_S4"/>
    <property type="match status" value="1"/>
</dbReference>
<dbReference type="SMART" id="SM00363">
    <property type="entry name" value="S4"/>
    <property type="match status" value="1"/>
</dbReference>
<dbReference type="SUPFAM" id="SSF55174">
    <property type="entry name" value="Alpha-L RNA-binding motif"/>
    <property type="match status" value="1"/>
</dbReference>
<dbReference type="PROSITE" id="PS00632">
    <property type="entry name" value="RIBOSOMAL_S4"/>
    <property type="match status" value="1"/>
</dbReference>
<dbReference type="PROSITE" id="PS50889">
    <property type="entry name" value="S4"/>
    <property type="match status" value="1"/>
</dbReference>
<proteinExistence type="inferred from homology"/>
<evidence type="ECO:0000250" key="1"/>
<evidence type="ECO:0000256" key="2">
    <source>
        <dbReference type="SAM" id="MobiDB-lite"/>
    </source>
</evidence>
<evidence type="ECO:0000305" key="3"/>
<organism>
    <name type="scientific">Lygeum spartum</name>
    <dbReference type="NCBI Taxonomy" id="29684"/>
    <lineage>
        <taxon>Eukaryota</taxon>
        <taxon>Viridiplantae</taxon>
        <taxon>Streptophyta</taxon>
        <taxon>Embryophyta</taxon>
        <taxon>Tracheophyta</taxon>
        <taxon>Spermatophyta</taxon>
        <taxon>Magnoliopsida</taxon>
        <taxon>Liliopsida</taxon>
        <taxon>Poales</taxon>
        <taxon>Poaceae</taxon>
        <taxon>BOP clade</taxon>
        <taxon>Pooideae</taxon>
        <taxon>Nardodae</taxon>
        <taxon>Lygeeae</taxon>
        <taxon>Lygeum</taxon>
    </lineage>
</organism>
<comment type="function">
    <text evidence="1">One of the primary rRNA binding proteins, it binds directly to 16S rRNA where it nucleates assembly of the body of the 30S subunit.</text>
</comment>
<comment type="function">
    <text evidence="1">With S5 and S12 plays an important role in translational accuracy.</text>
</comment>
<comment type="subunit">
    <text evidence="1">Part of the 30S ribosomal subunit. Contacts protein S5. The interaction surface between S4 and S5 is involved in control of translational fidelity (By similarity).</text>
</comment>
<comment type="subcellular location">
    <subcellularLocation>
        <location>Plastid</location>
        <location>Chloroplast</location>
    </subcellularLocation>
</comment>
<comment type="similarity">
    <text evidence="3">Belongs to the universal ribosomal protein uS4 family.</text>
</comment>
<feature type="chain" id="PRO_0000132623" description="Small ribosomal subunit protein uS4c">
    <location>
        <begin position="1"/>
        <end position="196" status="greater than"/>
    </location>
</feature>
<feature type="domain" description="S4 RNA-binding">
    <location>
        <begin position="89"/>
        <end position="169"/>
    </location>
</feature>
<feature type="region of interest" description="Disordered" evidence="2">
    <location>
        <begin position="17"/>
        <end position="38"/>
    </location>
</feature>
<feature type="compositionally biased region" description="Basic residues" evidence="2">
    <location>
        <begin position="24"/>
        <end position="38"/>
    </location>
</feature>
<feature type="non-terminal residue">
    <location>
        <position position="196"/>
    </location>
</feature>